<name>MUG_SALSV</name>
<dbReference type="EC" id="3.2.2.28" evidence="1"/>
<dbReference type="EMBL" id="CP001127">
    <property type="protein sequence ID" value="ACF89063.1"/>
    <property type="molecule type" value="Genomic_DNA"/>
</dbReference>
<dbReference type="RefSeq" id="WP_000237776.1">
    <property type="nucleotide sequence ID" value="NC_011094.1"/>
</dbReference>
<dbReference type="SMR" id="B4TVU6"/>
<dbReference type="KEGG" id="sew:SeSA_A3402"/>
<dbReference type="HOGENOM" id="CLU_042829_3_1_6"/>
<dbReference type="Proteomes" id="UP000001865">
    <property type="component" value="Chromosome"/>
</dbReference>
<dbReference type="GO" id="GO:0005737">
    <property type="term" value="C:cytoplasm"/>
    <property type="evidence" value="ECO:0007669"/>
    <property type="project" value="UniProtKB-SubCell"/>
</dbReference>
<dbReference type="GO" id="GO:0003677">
    <property type="term" value="F:DNA binding"/>
    <property type="evidence" value="ECO:0007669"/>
    <property type="project" value="UniProtKB-KW"/>
</dbReference>
<dbReference type="GO" id="GO:0008263">
    <property type="term" value="F:pyrimidine-specific mismatch base pair DNA N-glycosylase activity"/>
    <property type="evidence" value="ECO:0007669"/>
    <property type="project" value="UniProtKB-UniRule"/>
</dbReference>
<dbReference type="GO" id="GO:0004844">
    <property type="term" value="F:uracil DNA N-glycosylase activity"/>
    <property type="evidence" value="ECO:0007669"/>
    <property type="project" value="TreeGrafter"/>
</dbReference>
<dbReference type="GO" id="GO:0006285">
    <property type="term" value="P:base-excision repair, AP site formation"/>
    <property type="evidence" value="ECO:0007669"/>
    <property type="project" value="UniProtKB-UniRule"/>
</dbReference>
<dbReference type="CDD" id="cd10028">
    <property type="entry name" value="UDG-F2_TDG_MUG"/>
    <property type="match status" value="1"/>
</dbReference>
<dbReference type="Gene3D" id="3.40.470.10">
    <property type="entry name" value="Uracil-DNA glycosylase-like domain"/>
    <property type="match status" value="1"/>
</dbReference>
<dbReference type="HAMAP" id="MF_01956">
    <property type="entry name" value="MUG"/>
    <property type="match status" value="1"/>
</dbReference>
<dbReference type="InterPro" id="IPR015637">
    <property type="entry name" value="MUG/TDG"/>
</dbReference>
<dbReference type="InterPro" id="IPR023502">
    <property type="entry name" value="MUG_bact"/>
</dbReference>
<dbReference type="InterPro" id="IPR005122">
    <property type="entry name" value="Uracil-DNA_glycosylase-like"/>
</dbReference>
<dbReference type="InterPro" id="IPR036895">
    <property type="entry name" value="Uracil-DNA_glycosylase-like_sf"/>
</dbReference>
<dbReference type="NCBIfam" id="NF007570">
    <property type="entry name" value="PRK10201.1"/>
    <property type="match status" value="1"/>
</dbReference>
<dbReference type="PANTHER" id="PTHR12159">
    <property type="entry name" value="G/T AND G/U MISMATCH-SPECIFIC DNA GLYCOSYLASE"/>
    <property type="match status" value="1"/>
</dbReference>
<dbReference type="PANTHER" id="PTHR12159:SF9">
    <property type="entry name" value="G_T MISMATCH-SPECIFIC THYMINE DNA GLYCOSYLASE"/>
    <property type="match status" value="1"/>
</dbReference>
<dbReference type="Pfam" id="PF03167">
    <property type="entry name" value="UDG"/>
    <property type="match status" value="1"/>
</dbReference>
<dbReference type="SUPFAM" id="SSF52141">
    <property type="entry name" value="Uracil-DNA glycosylase-like"/>
    <property type="match status" value="1"/>
</dbReference>
<comment type="function">
    <text evidence="1">Excises ethenocytosine and uracil, which can arise by alkylation or deamination of cytosine, respectively, from the corresponding mispairs with guanine in ds-DNA. It is capable of hydrolyzing the carbon-nitrogen bond between the sugar-phosphate backbone of the DNA and the mispaired base. The complementary strand guanine functions in substrate recognition. Required for DNA damage lesion repair in stationary-phase cells.</text>
</comment>
<comment type="catalytic activity">
    <reaction evidence="1">
        <text>Specifically hydrolyzes mismatched double-stranded DNA and polynucleotides, releasing free uracil.</text>
        <dbReference type="EC" id="3.2.2.28"/>
    </reaction>
</comment>
<comment type="subunit">
    <text evidence="1">Binds DNA as a monomer.</text>
</comment>
<comment type="subcellular location">
    <subcellularLocation>
        <location evidence="1">Cytoplasm</location>
    </subcellularLocation>
</comment>
<comment type="similarity">
    <text evidence="1">Belongs to the uracil-DNA glycosylase (UDG) superfamily. TDG/mug family.</text>
</comment>
<accession>B4TVU6</accession>
<organism>
    <name type="scientific">Salmonella schwarzengrund (strain CVM19633)</name>
    <dbReference type="NCBI Taxonomy" id="439843"/>
    <lineage>
        <taxon>Bacteria</taxon>
        <taxon>Pseudomonadati</taxon>
        <taxon>Pseudomonadota</taxon>
        <taxon>Gammaproteobacteria</taxon>
        <taxon>Enterobacterales</taxon>
        <taxon>Enterobacteriaceae</taxon>
        <taxon>Salmonella</taxon>
    </lineage>
</organism>
<protein>
    <recommendedName>
        <fullName evidence="1">G/U mismatch-specific DNA glycosylase</fullName>
        <ecNumber evidence="1">3.2.2.28</ecNumber>
    </recommendedName>
    <alternativeName>
        <fullName evidence="1">Double-strand-specific uracil glycosylase</fullName>
    </alternativeName>
    <alternativeName>
        <fullName evidence="1">Mismatch-specific uracil DNA-glycosylase</fullName>
        <shortName evidence="1">MUG</shortName>
    </alternativeName>
</protein>
<feature type="chain" id="PRO_1000188970" description="G/U mismatch-specific DNA glycosylase">
    <location>
        <begin position="1"/>
        <end position="168"/>
    </location>
</feature>
<proteinExistence type="inferred from homology"/>
<sequence>MVKDILAPGLRVVFCGINPGLSSANTGFPFAHPANRFWKVIHLAGFTDRQLKPEEAEKLLDFRCGVTKLVDRPTVQATEVKLHELRSGGRNLIEKIEDYQPAALAVLGKQAFEQGFSQRGIAWGKQKIAIGATMVWVLPNPSGLNRIKTEKLVEAYRELDQALIMRGL</sequence>
<evidence type="ECO:0000255" key="1">
    <source>
        <dbReference type="HAMAP-Rule" id="MF_01956"/>
    </source>
</evidence>
<gene>
    <name evidence="1" type="primary">mug</name>
    <name type="ordered locus">SeSA_A3402</name>
</gene>
<reference key="1">
    <citation type="journal article" date="2011" name="J. Bacteriol.">
        <title>Comparative genomics of 28 Salmonella enterica isolates: evidence for CRISPR-mediated adaptive sublineage evolution.</title>
        <authorList>
            <person name="Fricke W.F."/>
            <person name="Mammel M.K."/>
            <person name="McDermott P.F."/>
            <person name="Tartera C."/>
            <person name="White D.G."/>
            <person name="Leclerc J.E."/>
            <person name="Ravel J."/>
            <person name="Cebula T.A."/>
        </authorList>
    </citation>
    <scope>NUCLEOTIDE SEQUENCE [LARGE SCALE GENOMIC DNA]</scope>
    <source>
        <strain>CVM19633</strain>
    </source>
</reference>
<keyword id="KW-0963">Cytoplasm</keyword>
<keyword id="KW-0227">DNA damage</keyword>
<keyword id="KW-0228">DNA excision</keyword>
<keyword id="KW-0234">DNA repair</keyword>
<keyword id="KW-0238">DNA-binding</keyword>
<keyword id="KW-0378">Hydrolase</keyword>